<organism>
    <name type="scientific">Salmonella enteritidis PT4 (strain P125109)</name>
    <dbReference type="NCBI Taxonomy" id="550537"/>
    <lineage>
        <taxon>Bacteria</taxon>
        <taxon>Pseudomonadati</taxon>
        <taxon>Pseudomonadota</taxon>
        <taxon>Gammaproteobacteria</taxon>
        <taxon>Enterobacterales</taxon>
        <taxon>Enterobacteriaceae</taxon>
        <taxon>Salmonella</taxon>
    </lineage>
</organism>
<dbReference type="EC" id="2.4.1.325" evidence="1"/>
<dbReference type="EMBL" id="AM933172">
    <property type="protein sequence ID" value="CAR35307.1"/>
    <property type="molecule type" value="Genomic_DNA"/>
</dbReference>
<dbReference type="RefSeq" id="WP_000217198.1">
    <property type="nucleotide sequence ID" value="NC_011294.1"/>
</dbReference>
<dbReference type="CAZy" id="GT56">
    <property type="family name" value="Glycosyltransferase Family 56"/>
</dbReference>
<dbReference type="KEGG" id="set:SEN3732"/>
<dbReference type="HOGENOM" id="CLU_066584_0_0_6"/>
<dbReference type="UniPathway" id="UPA00566"/>
<dbReference type="Proteomes" id="UP000000613">
    <property type="component" value="Chromosome"/>
</dbReference>
<dbReference type="GO" id="GO:0005886">
    <property type="term" value="C:plasma membrane"/>
    <property type="evidence" value="ECO:0007669"/>
    <property type="project" value="UniProtKB-SubCell"/>
</dbReference>
<dbReference type="GO" id="GO:0102031">
    <property type="term" value="F:4-acetamido-4,6-dideoxy-D-galactose transferase activity"/>
    <property type="evidence" value="ECO:0007669"/>
    <property type="project" value="UniProtKB-EC"/>
</dbReference>
<dbReference type="GO" id="GO:0008417">
    <property type="term" value="F:fucosyltransferase activity"/>
    <property type="evidence" value="ECO:0007669"/>
    <property type="project" value="InterPro"/>
</dbReference>
<dbReference type="GO" id="GO:0009246">
    <property type="term" value="P:enterobacterial common antigen biosynthetic process"/>
    <property type="evidence" value="ECO:0007669"/>
    <property type="project" value="UniProtKB-UniRule"/>
</dbReference>
<dbReference type="GO" id="GO:0036065">
    <property type="term" value="P:fucosylation"/>
    <property type="evidence" value="ECO:0007669"/>
    <property type="project" value="InterPro"/>
</dbReference>
<dbReference type="HAMAP" id="MF_01002">
    <property type="entry name" value="WecF_RffT"/>
    <property type="match status" value="1"/>
</dbReference>
<dbReference type="InterPro" id="IPR009993">
    <property type="entry name" value="WecF"/>
</dbReference>
<dbReference type="NCBIfam" id="NF002753">
    <property type="entry name" value="PRK02797.1-2"/>
    <property type="match status" value="1"/>
</dbReference>
<dbReference type="NCBIfam" id="NF002754">
    <property type="entry name" value="PRK02797.1-3"/>
    <property type="match status" value="1"/>
</dbReference>
<dbReference type="Pfam" id="PF07429">
    <property type="entry name" value="Glyco_transf_56"/>
    <property type="match status" value="1"/>
</dbReference>
<protein>
    <recommendedName>
        <fullName evidence="1">TDP-N-acetylfucosamine:lipid II N-acetylfucosaminyltransferase</fullName>
        <ecNumber evidence="1">2.4.1.325</ecNumber>
    </recommendedName>
    <alternativeName>
        <fullName evidence="1">4-alpha-L-fucosyltransferase</fullName>
    </alternativeName>
    <alternativeName>
        <fullName evidence="1">TDP-Fuc4NAc:lipid II Fuc4NAc transferase</fullName>
        <shortName evidence="1">Fuc4NAc transferase</shortName>
    </alternativeName>
</protein>
<evidence type="ECO:0000255" key="1">
    <source>
        <dbReference type="HAMAP-Rule" id="MF_01002"/>
    </source>
</evidence>
<proteinExistence type="inferred from homology"/>
<reference key="1">
    <citation type="journal article" date="2008" name="Genome Res.">
        <title>Comparative genome analysis of Salmonella enteritidis PT4 and Salmonella gallinarum 287/91 provides insights into evolutionary and host adaptation pathways.</title>
        <authorList>
            <person name="Thomson N.R."/>
            <person name="Clayton D.J."/>
            <person name="Windhorst D."/>
            <person name="Vernikos G."/>
            <person name="Davidson S."/>
            <person name="Churcher C."/>
            <person name="Quail M.A."/>
            <person name="Stevens M."/>
            <person name="Jones M.A."/>
            <person name="Watson M."/>
            <person name="Barron A."/>
            <person name="Layton A."/>
            <person name="Pickard D."/>
            <person name="Kingsley R.A."/>
            <person name="Bignell A."/>
            <person name="Clark L."/>
            <person name="Harris B."/>
            <person name="Ormond D."/>
            <person name="Abdellah Z."/>
            <person name="Brooks K."/>
            <person name="Cherevach I."/>
            <person name="Chillingworth T."/>
            <person name="Woodward J."/>
            <person name="Norberczak H."/>
            <person name="Lord A."/>
            <person name="Arrowsmith C."/>
            <person name="Jagels K."/>
            <person name="Moule S."/>
            <person name="Mungall K."/>
            <person name="Saunders M."/>
            <person name="Whitehead S."/>
            <person name="Chabalgoity J.A."/>
            <person name="Maskell D."/>
            <person name="Humphreys T."/>
            <person name="Roberts M."/>
            <person name="Barrow P.A."/>
            <person name="Dougan G."/>
            <person name="Parkhill J."/>
        </authorList>
    </citation>
    <scope>NUCLEOTIDE SEQUENCE [LARGE SCALE GENOMIC DNA]</scope>
    <source>
        <strain>P125109</strain>
    </source>
</reference>
<name>WECF_SALEP</name>
<feature type="chain" id="PRO_1000134605" description="TDP-N-acetylfucosamine:lipid II N-acetylfucosaminyltransferase">
    <location>
        <begin position="1"/>
        <end position="359"/>
    </location>
</feature>
<comment type="function">
    <text evidence="1">Catalyzes the synthesis of Und-PP-GlcNAc-ManNAcA-Fuc4NAc (Lipid III), the third lipid-linked intermediate involved in ECA synthesis.</text>
</comment>
<comment type="catalytic activity">
    <reaction evidence="1">
        <text>beta-D-ManNAcA-(1-&gt;4)-alpha-D-GlcNAc-di-trans,octa-cis-undecaprenyl diphosphate + dTDP-4-acetamido-4,6-dideoxy-alpha-D-galactose = alpha-D-FucNAc4-(1-&gt;4)-beta-D-ManNAcA-(1-&gt;4)-D-GlcNAc-undecaprenyl diphosphate + dTDP + H(+)</text>
        <dbReference type="Rhea" id="RHEA:28759"/>
        <dbReference type="ChEBI" id="CHEBI:15378"/>
        <dbReference type="ChEBI" id="CHEBI:58369"/>
        <dbReference type="ChEBI" id="CHEBI:61495"/>
        <dbReference type="ChEBI" id="CHEBI:61496"/>
        <dbReference type="ChEBI" id="CHEBI:68493"/>
        <dbReference type="EC" id="2.4.1.325"/>
    </reaction>
</comment>
<comment type="pathway">
    <text evidence="1">Bacterial outer membrane biogenesis; enterobacterial common antigen biosynthesis.</text>
</comment>
<comment type="subcellular location">
    <subcellularLocation>
        <location evidence="1">Cell inner membrane</location>
        <topology evidence="1">Peripheral membrane protein</topology>
    </subcellularLocation>
</comment>
<comment type="similarity">
    <text evidence="1">Belongs to the glycosyltransferase 56 family.</text>
</comment>
<gene>
    <name evidence="1" type="primary">wecF</name>
    <name evidence="1" type="synonym">rffT</name>
    <name type="ordered locus">SEN3732</name>
</gene>
<sequence>MTVLIHVLGSDIPHHNHTVLRFFNDTLAATSEHAREFMVAGEDNGFTESCPALSLRFYGSKKALAQAVIAKAKANRRQRFFFHGQFNTSLWLALLSGGIKPAQFYWHIWGADLYEVSNGLKFRLFYPLRRIAQGRVGCVFATRGDLSYFARQHPNVRGELLYFPTRMDPSLNAMAKECQRAGKLTILVGNSGDRSNQHIAALRAVYQQFGDTVNVVVPMGYPANNQAYIDEVRQAGLALFSAENLQILSEKMEFDAYLALLRQCDLGYFIFARQQGIGTLCLLIQADIPCVLNRDNPFWQDMAEQHLPVLFTTDDLNEQVVREAQRQLASVDKSGITFFSPNYLQPWHNALRIAAGEAE</sequence>
<accession>B5QVI4</accession>
<keyword id="KW-0997">Cell inner membrane</keyword>
<keyword id="KW-1003">Cell membrane</keyword>
<keyword id="KW-0328">Glycosyltransferase</keyword>
<keyword id="KW-0472">Membrane</keyword>
<keyword id="KW-0808">Transferase</keyword>